<accession>P39242</accession>
<accession>Q96217</accession>
<proteinExistence type="predicted"/>
<keyword id="KW-1185">Reference proteome</keyword>
<name>Y05G_BPT4</name>
<sequence>MKTVVKSYFGSHLYGTSTPESDVDFKEIFVPPARDILIGNVKEHMSKNTNNTSSKNTKDNIDHELYSLKYFFKLAADGEPVALDMLHTPPELVVKSDLPDVWKFIQDNRSRFYTTNMKSYLGYVRKQASKYGVKGSRLAALRDVLKVVNQIPEQWVDYQEDGSIKQRRTKVEDIKHRLPENEFCEWVFHNHEKTGPQTFYTVLGRKYQTTLSLIELKQSLNKLDAEYGERARKAEANEGIDWKALSHACRGGLQLLEIYKTGDLVYPLQDAPFILDVKLGKHPFKTVQEFLEDVVDQVEAASTEASKNGMQQKVDMSFWDDFLERVYLENHRSYYK</sequence>
<reference key="1">
    <citation type="submission" date="1996-11" db="EMBL/GenBank/DDBJ databases">
        <title>The 10.7 kb 'nonessential' region of bacteriophage T4 between the genes tk and nrdC: twenty new t4 genes, generally conserved among T-even phages.</title>
        <authorList>
            <person name="Mzhavia N."/>
            <person name="Marusich E."/>
            <person name="Djavakhishvili T."/>
            <person name="Neitzel J."/>
            <person name="Peterson S."/>
            <person name="Awaya M."/>
            <person name="Eidermiller J."/>
            <person name="Canada D."/>
            <person name="Tracy J."/>
            <person name="Gailbreath K."/>
            <person name="Paddison P."/>
            <person name="Anderson B."/>
            <person name="Stidham T."/>
            <person name="Blattner F."/>
            <person name="Kutter E.M."/>
        </authorList>
    </citation>
    <scope>NUCLEOTIDE SEQUENCE [GENOMIC DNA]</scope>
</reference>
<reference key="2">
    <citation type="journal article" date="2003" name="Microbiol. Mol. Biol. Rev.">
        <title>Bacteriophage T4 genome.</title>
        <authorList>
            <person name="Miller E.S."/>
            <person name="Kutter E."/>
            <person name="Mosig G."/>
            <person name="Arisaka F."/>
            <person name="Kunisawa T."/>
            <person name="Ruger W."/>
        </authorList>
    </citation>
    <scope>NUCLEOTIDE SEQUENCE [LARGE SCALE GENOMIC DNA]</scope>
</reference>
<gene>
    <name type="primary">y05G</name>
    <name type="synonym">nrdC.11</name>
    <name type="synonym">tk.-11</name>
</gene>
<protein>
    <recommendedName>
        <fullName>Uncharacterized 38.9 kDa protein in nrdC-mobD intergenic region</fullName>
    </recommendedName>
</protein>
<feature type="chain" id="PRO_0000165125" description="Uncharacterized 38.9 kDa protein in nrdC-mobD intergenic region">
    <location>
        <begin position="1"/>
        <end position="336"/>
    </location>
</feature>
<organism>
    <name type="scientific">Enterobacteria phage T4</name>
    <name type="common">Bacteriophage T4</name>
    <dbReference type="NCBI Taxonomy" id="10665"/>
    <lineage>
        <taxon>Viruses</taxon>
        <taxon>Duplodnaviria</taxon>
        <taxon>Heunggongvirae</taxon>
        <taxon>Uroviricota</taxon>
        <taxon>Caudoviricetes</taxon>
        <taxon>Straboviridae</taxon>
        <taxon>Tevenvirinae</taxon>
        <taxon>Tequatrovirus</taxon>
    </lineage>
</organism>
<organismHost>
    <name type="scientific">Escherichia coli</name>
    <dbReference type="NCBI Taxonomy" id="562"/>
</organismHost>
<dbReference type="EMBL" id="U76612">
    <property type="protein sequence ID" value="AAB26971.1"/>
    <property type="molecule type" value="Genomic_DNA"/>
</dbReference>
<dbReference type="EMBL" id="AF158101">
    <property type="protein sequence ID" value="AAD42629.1"/>
    <property type="molecule type" value="Genomic_DNA"/>
</dbReference>
<dbReference type="RefSeq" id="NP_049709.1">
    <property type="nucleotide sequence ID" value="NC_000866.4"/>
</dbReference>
<dbReference type="GeneID" id="1258584"/>
<dbReference type="KEGG" id="vg:1258584"/>
<dbReference type="OrthoDB" id="5415at10239"/>
<dbReference type="Proteomes" id="UP000009087">
    <property type="component" value="Segment"/>
</dbReference>
<dbReference type="InterPro" id="IPR018775">
    <property type="entry name" value="RlaP"/>
</dbReference>
<dbReference type="PANTHER" id="PTHR34817">
    <property type="entry name" value="NUCLEOTIDYLTRANSFERASE"/>
    <property type="match status" value="1"/>
</dbReference>
<dbReference type="PANTHER" id="PTHR34817:SF1">
    <property type="entry name" value="NUCLEOTIDYLTRANSFERASE"/>
    <property type="match status" value="1"/>
</dbReference>
<dbReference type="Pfam" id="PF10127">
    <property type="entry name" value="RlaP"/>
    <property type="match status" value="1"/>
</dbReference>